<proteinExistence type="evidence at protein level"/>
<name>LATES_STRCL</name>
<evidence type="ECO:0000250" key="1">
    <source>
        <dbReference type="UniProtKB" id="B5HDJ6"/>
    </source>
</evidence>
<evidence type="ECO:0000269" key="2">
    <source>
    </source>
</evidence>
<evidence type="ECO:0000303" key="3">
    <source>
    </source>
</evidence>
<evidence type="ECO:0000305" key="4"/>
<evidence type="ECO:0000305" key="5">
    <source>
    </source>
</evidence>
<evidence type="ECO:0000312" key="6">
    <source>
        <dbReference type="EMBL" id="EDY48874.1"/>
    </source>
</evidence>
<evidence type="ECO:0000312" key="7">
    <source>
        <dbReference type="EMBL" id="EFG03981.2"/>
    </source>
</evidence>
<evidence type="ECO:0000312" key="8">
    <source>
        <dbReference type="Proteomes" id="UP000002357"/>
    </source>
</evidence>
<accession>B5GRC8</accession>
<organism>
    <name type="scientific">Streptomyces clavuligerus</name>
    <dbReference type="NCBI Taxonomy" id="1901"/>
    <lineage>
        <taxon>Bacteria</taxon>
        <taxon>Bacillati</taxon>
        <taxon>Actinomycetota</taxon>
        <taxon>Actinomycetes</taxon>
        <taxon>Kitasatosporales</taxon>
        <taxon>Streptomycetaceae</taxon>
        <taxon>Streptomyces</taxon>
    </lineage>
</organism>
<dbReference type="EC" id="4.2.3.192" evidence="5"/>
<dbReference type="EMBL" id="DS570635">
    <property type="protein sequence ID" value="EDY48874.1"/>
    <property type="molecule type" value="Genomic_DNA"/>
</dbReference>
<dbReference type="EMBL" id="CM000914">
    <property type="protein sequence ID" value="EFG03981.2"/>
    <property type="molecule type" value="Genomic_DNA"/>
</dbReference>
<dbReference type="RefSeq" id="WP_003954347.1">
    <property type="nucleotide sequence ID" value="NZ_CM000914.1"/>
</dbReference>
<dbReference type="SMR" id="B5GRC8"/>
<dbReference type="GeneID" id="93733635"/>
<dbReference type="KEGG" id="ag:EFG03981"/>
<dbReference type="OrthoDB" id="2989600at2"/>
<dbReference type="BRENDA" id="4.2.3.192">
    <property type="organism ID" value="5988"/>
</dbReference>
<dbReference type="Proteomes" id="UP000002357">
    <property type="component" value="Plasmid pSCL4"/>
</dbReference>
<dbReference type="GO" id="GO:0016829">
    <property type="term" value="F:lyase activity"/>
    <property type="evidence" value="ECO:0007669"/>
    <property type="project" value="UniProtKB-KW"/>
</dbReference>
<dbReference type="GO" id="GO:0046872">
    <property type="term" value="F:metal ion binding"/>
    <property type="evidence" value="ECO:0007669"/>
    <property type="project" value="UniProtKB-KW"/>
</dbReference>
<dbReference type="Gene3D" id="1.10.600.10">
    <property type="entry name" value="Farnesyl Diphosphate Synthase"/>
    <property type="match status" value="1"/>
</dbReference>
<dbReference type="InterPro" id="IPR008949">
    <property type="entry name" value="Isoprenoid_synthase_dom_sf"/>
</dbReference>
<dbReference type="Pfam" id="PF19086">
    <property type="entry name" value="Terpene_syn_C_2"/>
    <property type="match status" value="1"/>
</dbReference>
<dbReference type="SUPFAM" id="SSF48576">
    <property type="entry name" value="Terpenoid synthases"/>
    <property type="match status" value="1"/>
</dbReference>
<feature type="chain" id="PRO_0000444806" description="Labda-7,13(16),14-triene synthase">
    <location>
        <begin position="1"/>
        <end position="343"/>
    </location>
</feature>
<feature type="short sequence motif" description="DDXXXE motif" evidence="5">
    <location>
        <begin position="114"/>
        <end position="119"/>
    </location>
</feature>
<feature type="short sequence motif" description="NXXXSXXXE motif" evidence="5">
    <location>
        <begin position="252"/>
        <end position="260"/>
    </location>
</feature>
<feature type="binding site" evidence="1">
    <location>
        <position position="114"/>
    </location>
    <ligand>
        <name>Mg(2+)</name>
        <dbReference type="ChEBI" id="CHEBI:18420"/>
        <label>1</label>
    </ligand>
</feature>
<feature type="binding site" evidence="1">
    <location>
        <position position="119"/>
    </location>
    <ligand>
        <name>Mg(2+)</name>
        <dbReference type="ChEBI" id="CHEBI:18420"/>
        <label>1</label>
    </ligand>
</feature>
<feature type="binding site" evidence="1">
    <location>
        <position position="119"/>
    </location>
    <ligand>
        <name>Mg(2+)</name>
        <dbReference type="ChEBI" id="CHEBI:18420"/>
        <label>2</label>
    </ligand>
</feature>
<feature type="binding site" evidence="1">
    <location>
        <position position="206"/>
    </location>
    <ligand>
        <name>substrate</name>
    </ligand>
</feature>
<feature type="binding site" evidence="1">
    <location>
        <position position="252"/>
    </location>
    <ligand>
        <name>Mg(2+)</name>
        <dbReference type="ChEBI" id="CHEBI:18420"/>
        <label>3</label>
    </ligand>
</feature>
<feature type="binding site" evidence="1">
    <location>
        <position position="256"/>
    </location>
    <ligand>
        <name>Mg(2+)</name>
        <dbReference type="ChEBI" id="CHEBI:18420"/>
        <label>3</label>
    </ligand>
</feature>
<feature type="binding site" evidence="1">
    <location>
        <position position="260"/>
    </location>
    <ligand>
        <name>Mg(2+)</name>
        <dbReference type="ChEBI" id="CHEBI:18420"/>
        <label>3</label>
    </ligand>
</feature>
<gene>
    <name evidence="7" type="ORF">SCLAV_p0491</name>
    <name evidence="6" type="ORF">SSCG_01902</name>
</gene>
<protein>
    <recommendedName>
        <fullName evidence="3">Labda-7,13(16),14-triene synthase</fullName>
        <ecNumber evidence="5">4.2.3.192</ecNumber>
    </recommendedName>
    <alternativeName>
        <fullName evidence="3">Type-A diterpene synthase</fullName>
    </alternativeName>
</protein>
<keyword id="KW-0456">Lyase</keyword>
<keyword id="KW-0460">Magnesium</keyword>
<keyword id="KW-0479">Metal-binding</keyword>
<keyword id="KW-0614">Plasmid</keyword>
<keyword id="KW-1185">Reference proteome</keyword>
<reference key="1">
    <citation type="submission" date="2008-02" db="EMBL/GenBank/DDBJ databases">
        <title>Annotation of Streptomyces clavuligerus ATCC 27064.</title>
        <authorList>
            <person name="Fischbach M."/>
            <person name="Ward D."/>
            <person name="Young S."/>
            <person name="Jaffe D."/>
            <person name="Gnerre S."/>
            <person name="Berlin A."/>
            <person name="Heiman D."/>
            <person name="Hepburn T."/>
            <person name="Sykes S."/>
            <person name="Alvarado L."/>
            <person name="Kodira C.D."/>
            <person name="Straight P."/>
            <person name="Clardy J."/>
            <person name="Hung D."/>
            <person name="Kolter R."/>
            <person name="Mekalanos J."/>
            <person name="Walker S."/>
            <person name="Walsh C.T."/>
            <person name="Lander E."/>
            <person name="Galagan J."/>
            <person name="Nusbaum C."/>
            <person name="Birren B."/>
        </authorList>
    </citation>
    <scope>NUCLEOTIDE SEQUENCE [LARGE SCALE GENOMIC DNA]</scope>
    <source>
        <strain>ATCC 27064 / DSM 738 / JCM 4710 / NBRC 13307 / NCIMB 12785 / NRRL 3585 / VKM Ac-602</strain>
    </source>
</reference>
<reference key="2">
    <citation type="journal article" date="2010" name="Genome Biol. Evol.">
        <title>The sequence of a 1.8-mb bacterial linear plasmid reveals a rich evolutionary reservoir of secondary metabolic pathways.</title>
        <authorList>
            <person name="Medema M.H."/>
            <person name="Trefzer A."/>
            <person name="Kovalchuk A."/>
            <person name="van den Berg M."/>
            <person name="Mueller U."/>
            <person name="Heijne W."/>
            <person name="Wu L."/>
            <person name="Alam M.T."/>
            <person name="Ronning C.M."/>
            <person name="Nierman W.C."/>
            <person name="Bovenberg R.A.L."/>
            <person name="Breitling R."/>
            <person name="Takano E."/>
        </authorList>
    </citation>
    <scope>NUCLEOTIDE SEQUENCE [LARGE SCALE GENOMIC DNA]</scope>
    <source>
        <strain evidence="8">ATCC 27064 / DSM 738 / JCM 4710 / NBRC 13307 / NCIMB 12785 / NRRL 3585 / VKM Ac-602</strain>
        <plasmid evidence="7">pSCL4</plasmid>
    </source>
</reference>
<reference key="3">
    <citation type="journal article" date="2016" name="J. Antibiot.">
        <title>Chemical diversity of labdane-type bicyclic diterpene biosynthesis in Actinomycetales microorganisms.</title>
        <authorList>
            <person name="Yamada Y."/>
            <person name="Komatsu M."/>
            <person name="Ikeda H."/>
        </authorList>
    </citation>
    <scope>FUNCTION</scope>
    <scope>CATALYTIC ACTIVITY</scope>
    <scope>COFACTOR</scope>
    <scope>DOMAIN</scope>
    <source>
        <strain>ATCC 27064 / DSM 738 / JCM 4710 / NBRC 13307 / NCIMB 12785 / NRRL 3585 / VKM Ac-602</strain>
    </source>
</reference>
<geneLocation type="plasmid" evidence="7 8">
    <name>pSCL4</name>
</geneLocation>
<comment type="function">
    <text evidence="2">Involved in the biosynthesis of the labdane-type bicyclic diterpene labda-7,13(16),14-triene. Catalyzes the conversion of labda-7,13(E)-dienyl diphosphate to yield labda-7,13(16),14-triene.</text>
</comment>
<comment type="catalytic activity">
    <reaction evidence="5">
        <text>(13E)-labda-7,13-dien-15-yl diphosphate = labda-7,13(16),14-triene + diphosphate</text>
        <dbReference type="Rhea" id="RHEA:54636"/>
        <dbReference type="ChEBI" id="CHEBI:33019"/>
        <dbReference type="ChEBI" id="CHEBI:63682"/>
        <dbReference type="ChEBI" id="CHEBI:138301"/>
        <dbReference type="EC" id="4.2.3.192"/>
    </reaction>
</comment>
<comment type="cofactor">
    <cofactor evidence="5">
        <name>Mg(2+)</name>
        <dbReference type="ChEBI" id="CHEBI:18420"/>
    </cofactor>
    <text evidence="1">Binds 3 Mg(2+) ions per subunit.</text>
</comment>
<comment type="domain">
    <text evidence="5">The Asp-Asp-Xaa-Xaa-Xaa-Glu (DDXXXE) and Asn-Xaa-Xaa-Xaa-Ser-Xaa-Xaa-Xaa-Glu (NSE) motifs are important for the catalytic activity, presumably through binding to Mg(2+).</text>
</comment>
<comment type="similarity">
    <text evidence="4">Belongs to the terpene synthase family.</text>
</comment>
<sequence length="343" mass="37335">MGRRARSARSFGVSPLWGGVSVRSGDRGEAAVGGLWEVPDFWGLFPSRISPLAGEVESGTRVWLDGWRLVEEAGPGERLKASKVGRLVALAYPDAPADLLRWAADLFAWLTAFDDVHVEAPGVTTAELGPHMASFVGVLETGTAPGAAPTPFPAALAELLDRARELLTPLQEERVRARLGKVFVAMLWEITTRERTVSTAEYETMRPHTFFSAVGAALVEPCAGLDLSHGVRADPGVRRLTQALATLWERTNDLYSFAYEQRALGSVPRTLPWLIAQERGLPLDAAFAEAGRWCEEEAVLAHRLIGELSASAREGVPEYAGAVAHAIGGTRRLYEVSDRWREE</sequence>